<reference key="1">
    <citation type="journal article" date="2006" name="Nat. Biotechnol.">
        <title>Genome sequence of the bioplastic-producing 'Knallgas' bacterium Ralstonia eutropha H16.</title>
        <authorList>
            <person name="Pohlmann A."/>
            <person name="Fricke W.F."/>
            <person name="Reinecke F."/>
            <person name="Kusian B."/>
            <person name="Liesegang H."/>
            <person name="Cramm R."/>
            <person name="Eitinger T."/>
            <person name="Ewering C."/>
            <person name="Poetter M."/>
            <person name="Schwartz E."/>
            <person name="Strittmatter A."/>
            <person name="Voss I."/>
            <person name="Gottschalk G."/>
            <person name="Steinbuechel A."/>
            <person name="Friedrich B."/>
            <person name="Bowien B."/>
        </authorList>
    </citation>
    <scope>NUCLEOTIDE SEQUENCE [LARGE SCALE GENOMIC DNA]</scope>
    <source>
        <strain>ATCC 17699 / DSM 428 / KCTC 22496 / NCIMB 10442 / H16 / Stanier 337</strain>
    </source>
</reference>
<keyword id="KW-0963">Cytoplasm</keyword>
<keyword id="KW-1185">Reference proteome</keyword>
<keyword id="KW-0694">RNA-binding</keyword>
<sequence length="150" mass="17330">MTIADNKKAFFDYFIEERYEAGIVLEGWEVKAIRAGRVQIKEGYVVVRDAEMFLIGAHISPLQSASTHVNPDPVRTRKLLLKADEIKKLIGKVEQRGYTLVPLNLHYTRGRVKCEIGLAKGKKQFDKRETEKQRDWQREKARIMKGDAKD</sequence>
<proteinExistence type="inferred from homology"/>
<comment type="function">
    <text evidence="1">Required for rescue of stalled ribosomes mediated by trans-translation. Binds to transfer-messenger RNA (tmRNA), required for stable association of tmRNA with ribosomes. tmRNA and SmpB together mimic tRNA shape, replacing the anticodon stem-loop with SmpB. tmRNA is encoded by the ssrA gene; the 2 termini fold to resemble tRNA(Ala) and it encodes a 'tag peptide', a short internal open reading frame. During trans-translation Ala-aminoacylated tmRNA acts like a tRNA, entering the A-site of stalled ribosomes, displacing the stalled mRNA. The ribosome then switches to translate the ORF on the tmRNA; the nascent peptide is terminated with the 'tag peptide' encoded by the tmRNA and targeted for degradation. The ribosome is freed to recommence translation, which seems to be the essential function of trans-translation.</text>
</comment>
<comment type="subcellular location">
    <subcellularLocation>
        <location evidence="1">Cytoplasm</location>
    </subcellularLocation>
    <text evidence="1">The tmRNA-SmpB complex associates with stalled 70S ribosomes.</text>
</comment>
<comment type="similarity">
    <text evidence="1">Belongs to the SmpB family.</text>
</comment>
<accession>Q0KA36</accession>
<evidence type="ECO:0000255" key="1">
    <source>
        <dbReference type="HAMAP-Rule" id="MF_00023"/>
    </source>
</evidence>
<evidence type="ECO:0000256" key="2">
    <source>
        <dbReference type="SAM" id="MobiDB-lite"/>
    </source>
</evidence>
<organism>
    <name type="scientific">Cupriavidus necator (strain ATCC 17699 / DSM 428 / KCTC 22496 / NCIMB 10442 / H16 / Stanier 337)</name>
    <name type="common">Ralstonia eutropha</name>
    <dbReference type="NCBI Taxonomy" id="381666"/>
    <lineage>
        <taxon>Bacteria</taxon>
        <taxon>Pseudomonadati</taxon>
        <taxon>Pseudomonadota</taxon>
        <taxon>Betaproteobacteria</taxon>
        <taxon>Burkholderiales</taxon>
        <taxon>Burkholderiaceae</taxon>
        <taxon>Cupriavidus</taxon>
    </lineage>
</organism>
<dbReference type="EMBL" id="AM260479">
    <property type="protein sequence ID" value="CAJ93135.1"/>
    <property type="molecule type" value="Genomic_DNA"/>
</dbReference>
<dbReference type="RefSeq" id="WP_010809581.1">
    <property type="nucleotide sequence ID" value="NZ_CP039287.1"/>
</dbReference>
<dbReference type="SMR" id="Q0KA36"/>
<dbReference type="STRING" id="381666.H16_A2035"/>
<dbReference type="KEGG" id="reh:H16_A2035"/>
<dbReference type="eggNOG" id="COG0691">
    <property type="taxonomic scope" value="Bacteria"/>
</dbReference>
<dbReference type="HOGENOM" id="CLU_108953_3_0_4"/>
<dbReference type="OrthoDB" id="9805462at2"/>
<dbReference type="Proteomes" id="UP000008210">
    <property type="component" value="Chromosome 1"/>
</dbReference>
<dbReference type="GO" id="GO:0005829">
    <property type="term" value="C:cytosol"/>
    <property type="evidence" value="ECO:0007669"/>
    <property type="project" value="TreeGrafter"/>
</dbReference>
<dbReference type="GO" id="GO:0003723">
    <property type="term" value="F:RNA binding"/>
    <property type="evidence" value="ECO:0007669"/>
    <property type="project" value="UniProtKB-UniRule"/>
</dbReference>
<dbReference type="GO" id="GO:0070929">
    <property type="term" value="P:trans-translation"/>
    <property type="evidence" value="ECO:0007669"/>
    <property type="project" value="UniProtKB-UniRule"/>
</dbReference>
<dbReference type="CDD" id="cd09294">
    <property type="entry name" value="SmpB"/>
    <property type="match status" value="1"/>
</dbReference>
<dbReference type="Gene3D" id="2.40.280.10">
    <property type="match status" value="1"/>
</dbReference>
<dbReference type="HAMAP" id="MF_00023">
    <property type="entry name" value="SmpB"/>
    <property type="match status" value="1"/>
</dbReference>
<dbReference type="InterPro" id="IPR023620">
    <property type="entry name" value="SmpB"/>
</dbReference>
<dbReference type="InterPro" id="IPR000037">
    <property type="entry name" value="SsrA-bd_prot"/>
</dbReference>
<dbReference type="InterPro" id="IPR020081">
    <property type="entry name" value="SsrA-bd_prot_CS"/>
</dbReference>
<dbReference type="NCBIfam" id="NF003843">
    <property type="entry name" value="PRK05422.1"/>
    <property type="match status" value="1"/>
</dbReference>
<dbReference type="NCBIfam" id="TIGR00086">
    <property type="entry name" value="smpB"/>
    <property type="match status" value="1"/>
</dbReference>
<dbReference type="PANTHER" id="PTHR30308:SF2">
    <property type="entry name" value="SSRA-BINDING PROTEIN"/>
    <property type="match status" value="1"/>
</dbReference>
<dbReference type="PANTHER" id="PTHR30308">
    <property type="entry name" value="TMRNA-BINDING COMPONENT OF TRANS-TRANSLATION TAGGING COMPLEX"/>
    <property type="match status" value="1"/>
</dbReference>
<dbReference type="Pfam" id="PF01668">
    <property type="entry name" value="SmpB"/>
    <property type="match status" value="1"/>
</dbReference>
<dbReference type="SUPFAM" id="SSF74982">
    <property type="entry name" value="Small protein B (SmpB)"/>
    <property type="match status" value="1"/>
</dbReference>
<dbReference type="PROSITE" id="PS01317">
    <property type="entry name" value="SSRP"/>
    <property type="match status" value="1"/>
</dbReference>
<name>SSRP_CUPNH</name>
<feature type="chain" id="PRO_1000002120" description="SsrA-binding protein">
    <location>
        <begin position="1"/>
        <end position="150"/>
    </location>
</feature>
<feature type="region of interest" description="Disordered" evidence="2">
    <location>
        <begin position="127"/>
        <end position="150"/>
    </location>
</feature>
<protein>
    <recommendedName>
        <fullName evidence="1">SsrA-binding protein</fullName>
    </recommendedName>
    <alternativeName>
        <fullName evidence="1">Small protein B</fullName>
    </alternativeName>
</protein>
<gene>
    <name evidence="1" type="primary">smpB</name>
    <name type="ordered locus">H16_A2035</name>
</gene>